<proteinExistence type="inferred from homology"/>
<organism>
    <name type="scientific">Escherichia coli O111:H- (strain 11128 / EHEC)</name>
    <dbReference type="NCBI Taxonomy" id="585396"/>
    <lineage>
        <taxon>Bacteria</taxon>
        <taxon>Pseudomonadati</taxon>
        <taxon>Pseudomonadota</taxon>
        <taxon>Gammaproteobacteria</taxon>
        <taxon>Enterobacterales</taxon>
        <taxon>Enterobacteriaceae</taxon>
        <taxon>Escherichia</taxon>
    </lineage>
</organism>
<accession>C8UMM8</accession>
<dbReference type="EC" id="1.14.99.46" evidence="1"/>
<dbReference type="EMBL" id="AP010960">
    <property type="protein sequence ID" value="BAI35148.1"/>
    <property type="molecule type" value="Genomic_DNA"/>
</dbReference>
<dbReference type="RefSeq" id="WP_001297176.1">
    <property type="nucleotide sequence ID" value="NC_013364.1"/>
</dbReference>
<dbReference type="SMR" id="C8UMM8"/>
<dbReference type="KEGG" id="eoi:ECO111_1201"/>
<dbReference type="HOGENOM" id="CLU_027853_1_1_6"/>
<dbReference type="GO" id="GO:0008726">
    <property type="term" value="F:alkanesulfonate monooxygenase activity"/>
    <property type="evidence" value="ECO:0007669"/>
    <property type="project" value="TreeGrafter"/>
</dbReference>
<dbReference type="GO" id="GO:0052614">
    <property type="term" value="F:uracil oxygenase activity"/>
    <property type="evidence" value="ECO:0007669"/>
    <property type="project" value="UniProtKB-EC"/>
</dbReference>
<dbReference type="GO" id="GO:0046306">
    <property type="term" value="P:alkanesulfonate catabolic process"/>
    <property type="evidence" value="ECO:0007669"/>
    <property type="project" value="TreeGrafter"/>
</dbReference>
<dbReference type="GO" id="GO:0019740">
    <property type="term" value="P:nitrogen utilization"/>
    <property type="evidence" value="ECO:0007669"/>
    <property type="project" value="UniProtKB-UniRule"/>
</dbReference>
<dbReference type="GO" id="GO:0006212">
    <property type="term" value="P:uracil catabolic process"/>
    <property type="evidence" value="ECO:0007669"/>
    <property type="project" value="UniProtKB-UniRule"/>
</dbReference>
<dbReference type="CDD" id="cd01094">
    <property type="entry name" value="Alkanesulfonate_monoxygenase"/>
    <property type="match status" value="1"/>
</dbReference>
<dbReference type="FunFam" id="3.20.20.30:FF:000003">
    <property type="entry name" value="Pyrimidine monooxygenase RutA"/>
    <property type="match status" value="1"/>
</dbReference>
<dbReference type="Gene3D" id="3.20.20.30">
    <property type="entry name" value="Luciferase-like domain"/>
    <property type="match status" value="1"/>
</dbReference>
<dbReference type="HAMAP" id="MF_01699">
    <property type="entry name" value="RutA"/>
    <property type="match status" value="1"/>
</dbReference>
<dbReference type="InterPro" id="IPR011251">
    <property type="entry name" value="Luciferase-like_dom"/>
</dbReference>
<dbReference type="InterPro" id="IPR036661">
    <property type="entry name" value="Luciferase-like_sf"/>
</dbReference>
<dbReference type="InterPro" id="IPR019914">
    <property type="entry name" value="Pyrimidine_monooxygenase_RutA"/>
</dbReference>
<dbReference type="InterPro" id="IPR050172">
    <property type="entry name" value="SsuD_RutA_monooxygenase"/>
</dbReference>
<dbReference type="NCBIfam" id="TIGR03612">
    <property type="entry name" value="RutA"/>
    <property type="match status" value="1"/>
</dbReference>
<dbReference type="PANTHER" id="PTHR42847">
    <property type="entry name" value="ALKANESULFONATE MONOOXYGENASE"/>
    <property type="match status" value="1"/>
</dbReference>
<dbReference type="PANTHER" id="PTHR42847:SF4">
    <property type="entry name" value="ALKANESULFONATE MONOOXYGENASE-RELATED"/>
    <property type="match status" value="1"/>
</dbReference>
<dbReference type="Pfam" id="PF00296">
    <property type="entry name" value="Bac_luciferase"/>
    <property type="match status" value="1"/>
</dbReference>
<dbReference type="SUPFAM" id="SSF51679">
    <property type="entry name" value="Bacterial luciferase-like"/>
    <property type="match status" value="1"/>
</dbReference>
<name>RUTA_ECO1A</name>
<gene>
    <name evidence="1" type="primary">rutA</name>
    <name type="ordered locus">ECO111_1201</name>
</gene>
<feature type="chain" id="PRO_0000402605" description="Pyrimidine monooxygenase RutA">
    <location>
        <begin position="1"/>
        <end position="363"/>
    </location>
</feature>
<feature type="binding site" evidence="1">
    <location>
        <begin position="49"/>
        <end position="50"/>
    </location>
    <ligand>
        <name>FMN</name>
        <dbReference type="ChEBI" id="CHEBI:58210"/>
    </ligand>
</feature>
<feature type="binding site" evidence="1">
    <location>
        <position position="115"/>
    </location>
    <ligand>
        <name>FMN</name>
        <dbReference type="ChEBI" id="CHEBI:58210"/>
    </ligand>
</feature>
<feature type="binding site" evidence="1">
    <location>
        <position position="124"/>
    </location>
    <ligand>
        <name>FMN</name>
        <dbReference type="ChEBI" id="CHEBI:58210"/>
    </ligand>
</feature>
<feature type="binding site" evidence="1">
    <location>
        <begin position="140"/>
        <end position="141"/>
    </location>
    <ligand>
        <name>FMN</name>
        <dbReference type="ChEBI" id="CHEBI:58210"/>
    </ligand>
</feature>
<feature type="binding site" evidence="1">
    <location>
        <position position="190"/>
    </location>
    <ligand>
        <name>FMN</name>
        <dbReference type="ChEBI" id="CHEBI:58210"/>
    </ligand>
</feature>
<keyword id="KW-0285">Flavoprotein</keyword>
<keyword id="KW-0288">FMN</keyword>
<keyword id="KW-0503">Monooxygenase</keyword>
<keyword id="KW-0521">NADP</keyword>
<keyword id="KW-0560">Oxidoreductase</keyword>
<evidence type="ECO:0000255" key="1">
    <source>
        <dbReference type="HAMAP-Rule" id="MF_01699"/>
    </source>
</evidence>
<protein>
    <recommendedName>
        <fullName evidence="1">Pyrimidine monooxygenase RutA</fullName>
        <ecNumber evidence="1">1.14.99.46</ecNumber>
    </recommendedName>
</protein>
<sequence length="363" mass="39915">MKIGVFVPIGNNGWLISTHAPQYMPTFELNKAIVQKAEHYHFDFALSMIKLRGFGGKTEFWDHNLESFTLMAGLAAVTSRIQIYATAATLTLPPAIVARMAATIDSISGGRFGVNLVTGWQKPEYEQMGIWPGDDYFSRRYDYLTEYVQVLRDLWGTGKSDFKGDFFTMNDCRVSPQPSVPMKVICAGQSDAGMAFSAQYADFNFCFGKGVNTPTAFAPTAARMKQAAEQTGRDVGSYVLFMVIADETDDAARAKWEHYKAGADEEALSWLTEQSQKDTRSGTDTNVRQMADPTSAVNINMGTLVGSYASVARMLDEVASVPGAEGVLLTFDDFLSGIETFGERIQPLMQCRAHLPALTQEVA</sequence>
<reference key="1">
    <citation type="journal article" date="2009" name="Proc. Natl. Acad. Sci. U.S.A.">
        <title>Comparative genomics reveal the mechanism of the parallel evolution of O157 and non-O157 enterohemorrhagic Escherichia coli.</title>
        <authorList>
            <person name="Ogura Y."/>
            <person name="Ooka T."/>
            <person name="Iguchi A."/>
            <person name="Toh H."/>
            <person name="Asadulghani M."/>
            <person name="Oshima K."/>
            <person name="Kodama T."/>
            <person name="Abe H."/>
            <person name="Nakayama K."/>
            <person name="Kurokawa K."/>
            <person name="Tobe T."/>
            <person name="Hattori M."/>
            <person name="Hayashi T."/>
        </authorList>
    </citation>
    <scope>NUCLEOTIDE SEQUENCE [LARGE SCALE GENOMIC DNA]</scope>
    <source>
        <strain>11128 / EHEC</strain>
    </source>
</reference>
<comment type="function">
    <text evidence="1">Catalyzes the pyrimidine ring opening between N-3 and C-4 by an unusual flavin hydroperoxide-catalyzed mechanism, adding oxygen atoms in the process to yield ureidoacrylate peracid, that immediately reacts with FMN forming ureidoacrylate and FMN-N(5)-oxide. The FMN-N(5)-oxide reacts spontaneously with NADH to produce FMN. Requires the flavin reductase RutF to regenerate FMN in vivo.</text>
</comment>
<comment type="catalytic activity">
    <reaction evidence="1">
        <text>uracil + FMNH2 + NADH + O2 = (Z)-3-ureidoacrylate + FMN + NAD(+) + H2O + H(+)</text>
        <dbReference type="Rhea" id="RHEA:31587"/>
        <dbReference type="ChEBI" id="CHEBI:15377"/>
        <dbReference type="ChEBI" id="CHEBI:15378"/>
        <dbReference type="ChEBI" id="CHEBI:15379"/>
        <dbReference type="ChEBI" id="CHEBI:17568"/>
        <dbReference type="ChEBI" id="CHEBI:57540"/>
        <dbReference type="ChEBI" id="CHEBI:57618"/>
        <dbReference type="ChEBI" id="CHEBI:57945"/>
        <dbReference type="ChEBI" id="CHEBI:58210"/>
        <dbReference type="ChEBI" id="CHEBI:59891"/>
        <dbReference type="EC" id="1.14.99.46"/>
    </reaction>
</comment>
<comment type="catalytic activity">
    <reaction evidence="1">
        <text>thymine + FMNH2 + NADH + O2 = (Z)-2-methylureidoacrylate + FMN + NAD(+) + H2O + H(+)</text>
        <dbReference type="Rhea" id="RHEA:31599"/>
        <dbReference type="ChEBI" id="CHEBI:15377"/>
        <dbReference type="ChEBI" id="CHEBI:15378"/>
        <dbReference type="ChEBI" id="CHEBI:15379"/>
        <dbReference type="ChEBI" id="CHEBI:17821"/>
        <dbReference type="ChEBI" id="CHEBI:57540"/>
        <dbReference type="ChEBI" id="CHEBI:57618"/>
        <dbReference type="ChEBI" id="CHEBI:57945"/>
        <dbReference type="ChEBI" id="CHEBI:58210"/>
        <dbReference type="ChEBI" id="CHEBI:143783"/>
        <dbReference type="EC" id="1.14.99.46"/>
    </reaction>
</comment>
<comment type="induction">
    <text evidence="1">Up-regulated by the nitrogen regulatory protein C (NtrC also called GlnG) and repressed by RutR.</text>
</comment>
<comment type="similarity">
    <text evidence="1">Belongs to the NtaA/SnaA/DszA monooxygenase family. RutA subfamily.</text>
</comment>